<evidence type="ECO:0000250" key="1"/>
<evidence type="ECO:0000250" key="2">
    <source>
        <dbReference type="UniProtKB" id="P00157"/>
    </source>
</evidence>
<evidence type="ECO:0000255" key="3">
    <source>
        <dbReference type="PROSITE-ProRule" id="PRU00967"/>
    </source>
</evidence>
<evidence type="ECO:0000255" key="4">
    <source>
        <dbReference type="PROSITE-ProRule" id="PRU00968"/>
    </source>
</evidence>
<protein>
    <recommendedName>
        <fullName>Cytochrome b</fullName>
    </recommendedName>
    <alternativeName>
        <fullName>Complex III subunit 3</fullName>
    </alternativeName>
    <alternativeName>
        <fullName>Complex III subunit III</fullName>
    </alternativeName>
    <alternativeName>
        <fullName>Cytochrome b-c1 complex subunit 3</fullName>
    </alternativeName>
    <alternativeName>
        <fullName>Ubiquinol-cytochrome-c reductase complex cytochrome b subunit</fullName>
    </alternativeName>
</protein>
<sequence>HPLLKIANHSLIDLPTPSNISAWWNFGSLLGLCLVIQILTGLFLAMHYTSDTLTAFSSVTHICRDVNYGWLIRYLHANGASMFFICLYMHVGRGIYYGSYTYLETWNIGIILLFAVMATAFMGYVLPWGQMSFWGATVITNLLSAIPYIGTTLVEWIWGGFSVDKATLTRFFAFHFILPFIIAALVMVHLLFLHETGSNNPSGIPSNSDKIPFHPYYTIKDALGFLVLILLLLLLVLFSPDLLGDPDNYTPANPLNTPPHIKPEWYFLFAYAILRSIPNKLGGVLALIMSILVLAIIPFLHISKQRSMMFRPISQVLFWVLVADLLTLTWIGGQPVEHPFITIGQVASILYFSIILILMPLASLIENKILKW</sequence>
<keyword id="KW-0249">Electron transport</keyword>
<keyword id="KW-0349">Heme</keyword>
<keyword id="KW-0408">Iron</keyword>
<keyword id="KW-0472">Membrane</keyword>
<keyword id="KW-0479">Metal-binding</keyword>
<keyword id="KW-0496">Mitochondrion</keyword>
<keyword id="KW-0999">Mitochondrion inner membrane</keyword>
<keyword id="KW-0679">Respiratory chain</keyword>
<keyword id="KW-0812">Transmembrane</keyword>
<keyword id="KW-1133">Transmembrane helix</keyword>
<keyword id="KW-0813">Transport</keyword>
<keyword id="KW-0830">Ubiquinone</keyword>
<accession>O47414</accession>
<organism>
    <name type="scientific">Sylvilagus transitionalis</name>
    <name type="common">New England cottontail rabbit</name>
    <dbReference type="NCBI Taxonomy" id="60891"/>
    <lineage>
        <taxon>Eukaryota</taxon>
        <taxon>Metazoa</taxon>
        <taxon>Chordata</taxon>
        <taxon>Craniata</taxon>
        <taxon>Vertebrata</taxon>
        <taxon>Euteleostomi</taxon>
        <taxon>Mammalia</taxon>
        <taxon>Eutheria</taxon>
        <taxon>Euarchontoglires</taxon>
        <taxon>Glires</taxon>
        <taxon>Lagomorpha</taxon>
        <taxon>Leporidae</taxon>
        <taxon>Sylvilagus</taxon>
    </lineage>
</organism>
<geneLocation type="mitochondrion"/>
<gene>
    <name type="primary">MT-CYB</name>
    <name type="synonym">COB</name>
    <name type="synonym">CYTB</name>
    <name type="synonym">MTCYB</name>
</gene>
<comment type="function">
    <text evidence="2">Component of the ubiquinol-cytochrome c reductase complex (complex III or cytochrome b-c1 complex) that is part of the mitochondrial respiratory chain. The b-c1 complex mediates electron transfer from ubiquinol to cytochrome c. Contributes to the generation of a proton gradient across the mitochondrial membrane that is then used for ATP synthesis.</text>
</comment>
<comment type="cofactor">
    <cofactor evidence="2">
        <name>heme b</name>
        <dbReference type="ChEBI" id="CHEBI:60344"/>
    </cofactor>
    <text evidence="2">Binds 2 heme b groups non-covalently.</text>
</comment>
<comment type="subunit">
    <text evidence="2">The cytochrome bc1 complex contains 11 subunits: 3 respiratory subunits (MT-CYB, CYC1 and UQCRFS1), 2 core proteins (UQCRC1 and UQCRC2) and 6 low-molecular weight proteins (UQCRH/QCR6, UQCRB/QCR7, UQCRQ/QCR8, UQCR10/QCR9, UQCR11/QCR10 and a cleavage product of UQCRFS1). This cytochrome bc1 complex then forms a dimer.</text>
</comment>
<comment type="subcellular location">
    <subcellularLocation>
        <location evidence="2">Mitochondrion inner membrane</location>
        <topology evidence="2">Multi-pass membrane protein</topology>
    </subcellularLocation>
</comment>
<comment type="miscellaneous">
    <text evidence="1">Heme 1 (or BL or b562) is low-potential and absorbs at about 562 nm, and heme 2 (or BH or b566) is high-potential and absorbs at about 566 nm.</text>
</comment>
<comment type="similarity">
    <text evidence="3 4">Belongs to the cytochrome b family.</text>
</comment>
<comment type="caution">
    <text evidence="2">The full-length protein contains only eight transmembrane helices, not nine as predicted by bioinformatics tools.</text>
</comment>
<feature type="chain" id="PRO_0000061630" description="Cytochrome b">
    <location>
        <begin position="1" status="less than"/>
        <end position="372"/>
    </location>
</feature>
<feature type="transmembrane region" description="Helical" evidence="2">
    <location>
        <begin position="26"/>
        <end position="46"/>
    </location>
</feature>
<feature type="transmembrane region" description="Helical" evidence="2">
    <location>
        <begin position="70"/>
        <end position="91"/>
    </location>
</feature>
<feature type="transmembrane region" description="Helical" evidence="2">
    <location>
        <begin position="106"/>
        <end position="126"/>
    </location>
</feature>
<feature type="transmembrane region" description="Helical" evidence="2">
    <location>
        <begin position="171"/>
        <end position="191"/>
    </location>
</feature>
<feature type="transmembrane region" description="Helical" evidence="2">
    <location>
        <begin position="219"/>
        <end position="239"/>
    </location>
</feature>
<feature type="transmembrane region" description="Helical" evidence="2">
    <location>
        <begin position="281"/>
        <end position="301"/>
    </location>
</feature>
<feature type="transmembrane region" description="Helical" evidence="2">
    <location>
        <begin position="313"/>
        <end position="333"/>
    </location>
</feature>
<feature type="transmembrane region" description="Helical" evidence="2">
    <location>
        <begin position="340"/>
        <end position="360"/>
    </location>
</feature>
<feature type="binding site" description="axial binding residue" evidence="2">
    <location>
        <position position="76"/>
    </location>
    <ligand>
        <name>heme b</name>
        <dbReference type="ChEBI" id="CHEBI:60344"/>
        <label>b562</label>
    </ligand>
    <ligandPart>
        <name>Fe</name>
        <dbReference type="ChEBI" id="CHEBI:18248"/>
    </ligandPart>
</feature>
<feature type="binding site" description="axial binding residue" evidence="2">
    <location>
        <position position="90"/>
    </location>
    <ligand>
        <name>heme b</name>
        <dbReference type="ChEBI" id="CHEBI:60344"/>
        <label>b566</label>
    </ligand>
    <ligandPart>
        <name>Fe</name>
        <dbReference type="ChEBI" id="CHEBI:18248"/>
    </ligandPart>
</feature>
<feature type="binding site" description="axial binding residue" evidence="2">
    <location>
        <position position="175"/>
    </location>
    <ligand>
        <name>heme b</name>
        <dbReference type="ChEBI" id="CHEBI:60344"/>
        <label>b562</label>
    </ligand>
    <ligandPart>
        <name>Fe</name>
        <dbReference type="ChEBI" id="CHEBI:18248"/>
    </ligandPart>
</feature>
<feature type="binding site" description="axial binding residue" evidence="2">
    <location>
        <position position="189"/>
    </location>
    <ligand>
        <name>heme b</name>
        <dbReference type="ChEBI" id="CHEBI:60344"/>
        <label>b566</label>
    </ligand>
    <ligandPart>
        <name>Fe</name>
        <dbReference type="ChEBI" id="CHEBI:18248"/>
    </ligandPart>
</feature>
<feature type="binding site" evidence="2">
    <location>
        <position position="194"/>
    </location>
    <ligand>
        <name>a ubiquinone</name>
        <dbReference type="ChEBI" id="CHEBI:16389"/>
    </ligand>
</feature>
<feature type="non-terminal residue">
    <location>
        <position position="1"/>
    </location>
</feature>
<proteinExistence type="inferred from homology"/>
<dbReference type="EMBL" id="AF034256">
    <property type="protein sequence ID" value="AAB87628.1"/>
    <property type="molecule type" value="Genomic_DNA"/>
</dbReference>
<dbReference type="SMR" id="O47414"/>
<dbReference type="GO" id="GO:0005743">
    <property type="term" value="C:mitochondrial inner membrane"/>
    <property type="evidence" value="ECO:0007669"/>
    <property type="project" value="UniProtKB-SubCell"/>
</dbReference>
<dbReference type="GO" id="GO:0045275">
    <property type="term" value="C:respiratory chain complex III"/>
    <property type="evidence" value="ECO:0007669"/>
    <property type="project" value="InterPro"/>
</dbReference>
<dbReference type="GO" id="GO:0046872">
    <property type="term" value="F:metal ion binding"/>
    <property type="evidence" value="ECO:0007669"/>
    <property type="project" value="UniProtKB-KW"/>
</dbReference>
<dbReference type="GO" id="GO:0008121">
    <property type="term" value="F:ubiquinol-cytochrome-c reductase activity"/>
    <property type="evidence" value="ECO:0007669"/>
    <property type="project" value="InterPro"/>
</dbReference>
<dbReference type="GO" id="GO:0006122">
    <property type="term" value="P:mitochondrial electron transport, ubiquinol to cytochrome c"/>
    <property type="evidence" value="ECO:0007669"/>
    <property type="project" value="TreeGrafter"/>
</dbReference>
<dbReference type="CDD" id="cd00290">
    <property type="entry name" value="cytochrome_b_C"/>
    <property type="match status" value="1"/>
</dbReference>
<dbReference type="CDD" id="cd00284">
    <property type="entry name" value="Cytochrome_b_N"/>
    <property type="match status" value="1"/>
</dbReference>
<dbReference type="FunFam" id="1.20.810.10:FF:000002">
    <property type="entry name" value="Cytochrome b"/>
    <property type="match status" value="1"/>
</dbReference>
<dbReference type="Gene3D" id="1.20.810.10">
    <property type="entry name" value="Cytochrome Bc1 Complex, Chain C"/>
    <property type="match status" value="1"/>
</dbReference>
<dbReference type="InterPro" id="IPR005798">
    <property type="entry name" value="Cyt_b/b6_C"/>
</dbReference>
<dbReference type="InterPro" id="IPR036150">
    <property type="entry name" value="Cyt_b/b6_C_sf"/>
</dbReference>
<dbReference type="InterPro" id="IPR005797">
    <property type="entry name" value="Cyt_b/b6_N"/>
</dbReference>
<dbReference type="InterPro" id="IPR027387">
    <property type="entry name" value="Cytb/b6-like_sf"/>
</dbReference>
<dbReference type="InterPro" id="IPR030689">
    <property type="entry name" value="Cytochrome_b"/>
</dbReference>
<dbReference type="InterPro" id="IPR048260">
    <property type="entry name" value="Cytochrome_b_C_euk/bac"/>
</dbReference>
<dbReference type="InterPro" id="IPR048259">
    <property type="entry name" value="Cytochrome_b_N_euk/bac"/>
</dbReference>
<dbReference type="InterPro" id="IPR016174">
    <property type="entry name" value="Di-haem_cyt_TM"/>
</dbReference>
<dbReference type="PANTHER" id="PTHR19271">
    <property type="entry name" value="CYTOCHROME B"/>
    <property type="match status" value="1"/>
</dbReference>
<dbReference type="PANTHER" id="PTHR19271:SF16">
    <property type="entry name" value="CYTOCHROME B"/>
    <property type="match status" value="1"/>
</dbReference>
<dbReference type="Pfam" id="PF00032">
    <property type="entry name" value="Cytochrom_B_C"/>
    <property type="match status" value="1"/>
</dbReference>
<dbReference type="Pfam" id="PF00033">
    <property type="entry name" value="Cytochrome_B"/>
    <property type="match status" value="1"/>
</dbReference>
<dbReference type="PIRSF" id="PIRSF038885">
    <property type="entry name" value="COB"/>
    <property type="match status" value="1"/>
</dbReference>
<dbReference type="SUPFAM" id="SSF81648">
    <property type="entry name" value="a domain/subunit of cytochrome bc1 complex (Ubiquinol-cytochrome c reductase)"/>
    <property type="match status" value="1"/>
</dbReference>
<dbReference type="SUPFAM" id="SSF81342">
    <property type="entry name" value="Transmembrane di-heme cytochromes"/>
    <property type="match status" value="1"/>
</dbReference>
<dbReference type="PROSITE" id="PS51003">
    <property type="entry name" value="CYTB_CTER"/>
    <property type="match status" value="1"/>
</dbReference>
<dbReference type="PROSITE" id="PS51002">
    <property type="entry name" value="CYTB_NTER"/>
    <property type="match status" value="1"/>
</dbReference>
<name>CYB_SYLTR</name>
<reference key="1">
    <citation type="submission" date="1997-11" db="EMBL/GenBank/DDBJ databases">
        <authorList>
            <person name="Snyder M.W."/>
            <person name="Husband T.P."/>
        </authorList>
    </citation>
    <scope>NUCLEOTIDE SEQUENCE [GENOMIC DNA]</scope>
</reference>